<sequence length="318" mass="34673">MIKKRNTTKISVIGAGSVGATTAYALMLSGVATEIVLVDVNKAKTEGEAMDLSHGADFVKPVNILSGDYKDTEGSDIVVITAGAAQKVGETRLQLINKNINIFKSIIPEVVKYNKDAILLVVSNPVDVLSYVTYKLSGFPKERVIGSGTVLDTSRLKHEIGKRYKIDPRNVNTYIMGEHGDSEIATWSVTNIQNIKIDEYANKENLEYNDNFRKEVYENVKNAAYEVINRKGATFYAIALAVTRIVKAILGDEKTILPVSTLVENYYGIKDVYLGMPCIVGGSGIEKALSIDLNKTEASKLVKSAETLKNTLNNASGL</sequence>
<feature type="chain" id="PRO_1000126155" description="L-lactate dehydrogenase">
    <location>
        <begin position="1"/>
        <end position="318"/>
    </location>
</feature>
<feature type="active site" description="Proton acceptor" evidence="1">
    <location>
        <position position="179"/>
    </location>
</feature>
<feature type="binding site" evidence="1">
    <location>
        <position position="18"/>
    </location>
    <ligand>
        <name>NAD(+)</name>
        <dbReference type="ChEBI" id="CHEBI:57540"/>
    </ligand>
</feature>
<feature type="binding site" evidence="1">
    <location>
        <position position="39"/>
    </location>
    <ligand>
        <name>NAD(+)</name>
        <dbReference type="ChEBI" id="CHEBI:57540"/>
    </ligand>
</feature>
<feature type="binding site" evidence="1">
    <location>
        <position position="44"/>
    </location>
    <ligand>
        <name>NAD(+)</name>
        <dbReference type="ChEBI" id="CHEBI:57540"/>
    </ligand>
</feature>
<feature type="binding site" evidence="1">
    <location>
        <position position="69"/>
    </location>
    <ligand>
        <name>NAD(+)</name>
        <dbReference type="ChEBI" id="CHEBI:57540"/>
    </ligand>
</feature>
<feature type="binding site" evidence="1">
    <location>
        <begin position="83"/>
        <end position="84"/>
    </location>
    <ligand>
        <name>NAD(+)</name>
        <dbReference type="ChEBI" id="CHEBI:57540"/>
    </ligand>
</feature>
<feature type="binding site" evidence="1">
    <location>
        <position position="86"/>
    </location>
    <ligand>
        <name>substrate</name>
    </ligand>
</feature>
<feature type="binding site" evidence="1">
    <location>
        <position position="92"/>
    </location>
    <ligand>
        <name>substrate</name>
    </ligand>
</feature>
<feature type="binding site" evidence="1">
    <location>
        <position position="105"/>
    </location>
    <ligand>
        <name>NAD(+)</name>
        <dbReference type="ChEBI" id="CHEBI:57540"/>
    </ligand>
</feature>
<feature type="binding site" evidence="1">
    <location>
        <begin position="122"/>
        <end position="124"/>
    </location>
    <ligand>
        <name>NAD(+)</name>
        <dbReference type="ChEBI" id="CHEBI:57540"/>
    </ligand>
</feature>
<feature type="binding site" evidence="1">
    <location>
        <begin position="124"/>
        <end position="127"/>
    </location>
    <ligand>
        <name>substrate</name>
    </ligand>
</feature>
<feature type="binding site" evidence="1">
    <location>
        <position position="147"/>
    </location>
    <ligand>
        <name>NAD(+)</name>
        <dbReference type="ChEBI" id="CHEBI:57540"/>
    </ligand>
</feature>
<feature type="binding site" evidence="1">
    <location>
        <begin position="152"/>
        <end position="155"/>
    </location>
    <ligand>
        <name>substrate</name>
    </ligand>
</feature>
<feature type="binding site" evidence="1">
    <location>
        <position position="234"/>
    </location>
    <ligand>
        <name>substrate</name>
    </ligand>
</feature>
<feature type="modified residue" description="Phosphotyrosine" evidence="1">
    <location>
        <position position="225"/>
    </location>
</feature>
<name>LDH_CLOBK</name>
<accession>B1IKX1</accession>
<organism>
    <name type="scientific">Clostridium botulinum (strain Okra / Type B1)</name>
    <dbReference type="NCBI Taxonomy" id="498213"/>
    <lineage>
        <taxon>Bacteria</taxon>
        <taxon>Bacillati</taxon>
        <taxon>Bacillota</taxon>
        <taxon>Clostridia</taxon>
        <taxon>Eubacteriales</taxon>
        <taxon>Clostridiaceae</taxon>
        <taxon>Clostridium</taxon>
    </lineage>
</organism>
<gene>
    <name evidence="1" type="primary">ldh</name>
    <name type="ordered locus">CLD_3035</name>
</gene>
<dbReference type="EC" id="1.1.1.27" evidence="1"/>
<dbReference type="EMBL" id="CP000939">
    <property type="protein sequence ID" value="ACA45332.1"/>
    <property type="molecule type" value="Genomic_DNA"/>
</dbReference>
<dbReference type="RefSeq" id="WP_015957844.1">
    <property type="nucleotide sequence ID" value="NC_010516.1"/>
</dbReference>
<dbReference type="SMR" id="B1IKX1"/>
<dbReference type="KEGG" id="cbb:CLD_3035"/>
<dbReference type="HOGENOM" id="CLU_045401_1_1_9"/>
<dbReference type="UniPathway" id="UPA00554">
    <property type="reaction ID" value="UER00611"/>
</dbReference>
<dbReference type="Proteomes" id="UP000008541">
    <property type="component" value="Chromosome"/>
</dbReference>
<dbReference type="GO" id="GO:0005737">
    <property type="term" value="C:cytoplasm"/>
    <property type="evidence" value="ECO:0007669"/>
    <property type="project" value="UniProtKB-SubCell"/>
</dbReference>
<dbReference type="GO" id="GO:0004459">
    <property type="term" value="F:L-lactate dehydrogenase activity"/>
    <property type="evidence" value="ECO:0007669"/>
    <property type="project" value="UniProtKB-UniRule"/>
</dbReference>
<dbReference type="GO" id="GO:0006096">
    <property type="term" value="P:glycolytic process"/>
    <property type="evidence" value="ECO:0007669"/>
    <property type="project" value="UniProtKB-UniRule"/>
</dbReference>
<dbReference type="GO" id="GO:0006089">
    <property type="term" value="P:lactate metabolic process"/>
    <property type="evidence" value="ECO:0007669"/>
    <property type="project" value="TreeGrafter"/>
</dbReference>
<dbReference type="CDD" id="cd05292">
    <property type="entry name" value="LDH_2"/>
    <property type="match status" value="1"/>
</dbReference>
<dbReference type="FunFam" id="3.40.50.720:FF:000018">
    <property type="entry name" value="Malate dehydrogenase"/>
    <property type="match status" value="1"/>
</dbReference>
<dbReference type="Gene3D" id="3.90.110.10">
    <property type="entry name" value="Lactate dehydrogenase/glycoside hydrolase, family 4, C-terminal"/>
    <property type="match status" value="1"/>
</dbReference>
<dbReference type="Gene3D" id="3.40.50.720">
    <property type="entry name" value="NAD(P)-binding Rossmann-like Domain"/>
    <property type="match status" value="1"/>
</dbReference>
<dbReference type="HAMAP" id="MF_00488">
    <property type="entry name" value="Lactate_dehydrog"/>
    <property type="match status" value="1"/>
</dbReference>
<dbReference type="InterPro" id="IPR001557">
    <property type="entry name" value="L-lactate/malate_DH"/>
</dbReference>
<dbReference type="InterPro" id="IPR011304">
    <property type="entry name" value="L-lactate_DH"/>
</dbReference>
<dbReference type="InterPro" id="IPR018177">
    <property type="entry name" value="L-lactate_DH_AS"/>
</dbReference>
<dbReference type="InterPro" id="IPR022383">
    <property type="entry name" value="Lactate/malate_DH_C"/>
</dbReference>
<dbReference type="InterPro" id="IPR001236">
    <property type="entry name" value="Lactate/malate_DH_N"/>
</dbReference>
<dbReference type="InterPro" id="IPR015955">
    <property type="entry name" value="Lactate_DH/Glyco_Ohase_4_C"/>
</dbReference>
<dbReference type="InterPro" id="IPR036291">
    <property type="entry name" value="NAD(P)-bd_dom_sf"/>
</dbReference>
<dbReference type="NCBIfam" id="TIGR01771">
    <property type="entry name" value="L-LDH-NAD"/>
    <property type="match status" value="1"/>
</dbReference>
<dbReference type="NCBIfam" id="NF000824">
    <property type="entry name" value="PRK00066.1"/>
    <property type="match status" value="1"/>
</dbReference>
<dbReference type="NCBIfam" id="NF004863">
    <property type="entry name" value="PRK06223.1"/>
    <property type="match status" value="1"/>
</dbReference>
<dbReference type="PANTHER" id="PTHR43128">
    <property type="entry name" value="L-2-HYDROXYCARBOXYLATE DEHYDROGENASE (NAD(P)(+))"/>
    <property type="match status" value="1"/>
</dbReference>
<dbReference type="PANTHER" id="PTHR43128:SF16">
    <property type="entry name" value="L-LACTATE DEHYDROGENASE"/>
    <property type="match status" value="1"/>
</dbReference>
<dbReference type="Pfam" id="PF02866">
    <property type="entry name" value="Ldh_1_C"/>
    <property type="match status" value="1"/>
</dbReference>
<dbReference type="Pfam" id="PF00056">
    <property type="entry name" value="Ldh_1_N"/>
    <property type="match status" value="1"/>
</dbReference>
<dbReference type="PIRSF" id="PIRSF000102">
    <property type="entry name" value="Lac_mal_DH"/>
    <property type="match status" value="1"/>
</dbReference>
<dbReference type="PRINTS" id="PR00086">
    <property type="entry name" value="LLDHDRGNASE"/>
</dbReference>
<dbReference type="SUPFAM" id="SSF56327">
    <property type="entry name" value="LDH C-terminal domain-like"/>
    <property type="match status" value="1"/>
</dbReference>
<dbReference type="SUPFAM" id="SSF51735">
    <property type="entry name" value="NAD(P)-binding Rossmann-fold domains"/>
    <property type="match status" value="1"/>
</dbReference>
<dbReference type="PROSITE" id="PS00064">
    <property type="entry name" value="L_LDH"/>
    <property type="match status" value="1"/>
</dbReference>
<protein>
    <recommendedName>
        <fullName evidence="1">L-lactate dehydrogenase</fullName>
        <shortName evidence="1">L-LDH</shortName>
        <ecNumber evidence="1">1.1.1.27</ecNumber>
    </recommendedName>
</protein>
<proteinExistence type="inferred from homology"/>
<evidence type="ECO:0000255" key="1">
    <source>
        <dbReference type="HAMAP-Rule" id="MF_00488"/>
    </source>
</evidence>
<comment type="function">
    <text evidence="1">Catalyzes the conversion of lactate to pyruvate.</text>
</comment>
<comment type="catalytic activity">
    <reaction evidence="1">
        <text>(S)-lactate + NAD(+) = pyruvate + NADH + H(+)</text>
        <dbReference type="Rhea" id="RHEA:23444"/>
        <dbReference type="ChEBI" id="CHEBI:15361"/>
        <dbReference type="ChEBI" id="CHEBI:15378"/>
        <dbReference type="ChEBI" id="CHEBI:16651"/>
        <dbReference type="ChEBI" id="CHEBI:57540"/>
        <dbReference type="ChEBI" id="CHEBI:57945"/>
        <dbReference type="EC" id="1.1.1.27"/>
    </reaction>
</comment>
<comment type="pathway">
    <text evidence="1">Fermentation; pyruvate fermentation to lactate; (S)-lactate from pyruvate: step 1/1.</text>
</comment>
<comment type="subunit">
    <text evidence="1">Homotetramer.</text>
</comment>
<comment type="subcellular location">
    <subcellularLocation>
        <location evidence="1">Cytoplasm</location>
    </subcellularLocation>
</comment>
<comment type="similarity">
    <text evidence="1">Belongs to the LDH/MDH superfamily. LDH family.</text>
</comment>
<reference key="1">
    <citation type="journal article" date="2007" name="PLoS ONE">
        <title>Analysis of the neurotoxin complex genes in Clostridium botulinum A1-A4 and B1 strains: BoNT/A3, /Ba4 and /B1 clusters are located within plasmids.</title>
        <authorList>
            <person name="Smith T.J."/>
            <person name="Hill K.K."/>
            <person name="Foley B.T."/>
            <person name="Detter J.C."/>
            <person name="Munk A.C."/>
            <person name="Bruce D.C."/>
            <person name="Doggett N.A."/>
            <person name="Smith L.A."/>
            <person name="Marks J.D."/>
            <person name="Xie G."/>
            <person name="Brettin T.S."/>
        </authorList>
    </citation>
    <scope>NUCLEOTIDE SEQUENCE [LARGE SCALE GENOMIC DNA]</scope>
    <source>
        <strain>Okra / Type B1</strain>
    </source>
</reference>
<keyword id="KW-0963">Cytoplasm</keyword>
<keyword id="KW-0520">NAD</keyword>
<keyword id="KW-0560">Oxidoreductase</keyword>
<keyword id="KW-0597">Phosphoprotein</keyword>